<reference key="1">
    <citation type="journal article" date="1997" name="Gene">
        <title>Cloning and sequencing of a 35.7 kb in the 70 degree-73 degree region of the Bacillus subtilis genome reveal genes for a new two-component system, three spore germination proteins, an iron uptake system and a general stress response protein.</title>
        <authorList>
            <person name="Yamamoto H."/>
            <person name="Uchiyama S."/>
            <person name="Nugroho F.A."/>
            <person name="Sekiguchi J."/>
        </authorList>
    </citation>
    <scope>NUCLEOTIDE SEQUENCE [GENOMIC DNA]</scope>
    <source>
        <strain>168 / AC327</strain>
    </source>
</reference>
<reference key="2">
    <citation type="journal article" date="1997" name="Nature">
        <title>The complete genome sequence of the Gram-positive bacterium Bacillus subtilis.</title>
        <authorList>
            <person name="Kunst F."/>
            <person name="Ogasawara N."/>
            <person name="Moszer I."/>
            <person name="Albertini A.M."/>
            <person name="Alloni G."/>
            <person name="Azevedo V."/>
            <person name="Bertero M.G."/>
            <person name="Bessieres P."/>
            <person name="Bolotin A."/>
            <person name="Borchert S."/>
            <person name="Borriss R."/>
            <person name="Boursier L."/>
            <person name="Brans A."/>
            <person name="Braun M."/>
            <person name="Brignell S.C."/>
            <person name="Bron S."/>
            <person name="Brouillet S."/>
            <person name="Bruschi C.V."/>
            <person name="Caldwell B."/>
            <person name="Capuano V."/>
            <person name="Carter N.M."/>
            <person name="Choi S.-K."/>
            <person name="Codani J.-J."/>
            <person name="Connerton I.F."/>
            <person name="Cummings N.J."/>
            <person name="Daniel R.A."/>
            <person name="Denizot F."/>
            <person name="Devine K.M."/>
            <person name="Duesterhoeft A."/>
            <person name="Ehrlich S.D."/>
            <person name="Emmerson P.T."/>
            <person name="Entian K.-D."/>
            <person name="Errington J."/>
            <person name="Fabret C."/>
            <person name="Ferrari E."/>
            <person name="Foulger D."/>
            <person name="Fritz C."/>
            <person name="Fujita M."/>
            <person name="Fujita Y."/>
            <person name="Fuma S."/>
            <person name="Galizzi A."/>
            <person name="Galleron N."/>
            <person name="Ghim S.-Y."/>
            <person name="Glaser P."/>
            <person name="Goffeau A."/>
            <person name="Golightly E.J."/>
            <person name="Grandi G."/>
            <person name="Guiseppi G."/>
            <person name="Guy B.J."/>
            <person name="Haga K."/>
            <person name="Haiech J."/>
            <person name="Harwood C.R."/>
            <person name="Henaut A."/>
            <person name="Hilbert H."/>
            <person name="Holsappel S."/>
            <person name="Hosono S."/>
            <person name="Hullo M.-F."/>
            <person name="Itaya M."/>
            <person name="Jones L.-M."/>
            <person name="Joris B."/>
            <person name="Karamata D."/>
            <person name="Kasahara Y."/>
            <person name="Klaerr-Blanchard M."/>
            <person name="Klein C."/>
            <person name="Kobayashi Y."/>
            <person name="Koetter P."/>
            <person name="Koningstein G."/>
            <person name="Krogh S."/>
            <person name="Kumano M."/>
            <person name="Kurita K."/>
            <person name="Lapidus A."/>
            <person name="Lardinois S."/>
            <person name="Lauber J."/>
            <person name="Lazarevic V."/>
            <person name="Lee S.-M."/>
            <person name="Levine A."/>
            <person name="Liu H."/>
            <person name="Masuda S."/>
            <person name="Mauel C."/>
            <person name="Medigue C."/>
            <person name="Medina N."/>
            <person name="Mellado R.P."/>
            <person name="Mizuno M."/>
            <person name="Moestl D."/>
            <person name="Nakai S."/>
            <person name="Noback M."/>
            <person name="Noone D."/>
            <person name="O'Reilly M."/>
            <person name="Ogawa K."/>
            <person name="Ogiwara A."/>
            <person name="Oudega B."/>
            <person name="Park S.-H."/>
            <person name="Parro V."/>
            <person name="Pohl T.M."/>
            <person name="Portetelle D."/>
            <person name="Porwollik S."/>
            <person name="Prescott A.M."/>
            <person name="Presecan E."/>
            <person name="Pujic P."/>
            <person name="Purnelle B."/>
            <person name="Rapoport G."/>
            <person name="Rey M."/>
            <person name="Reynolds S."/>
            <person name="Rieger M."/>
            <person name="Rivolta C."/>
            <person name="Rocha E."/>
            <person name="Roche B."/>
            <person name="Rose M."/>
            <person name="Sadaie Y."/>
            <person name="Sato T."/>
            <person name="Scanlan E."/>
            <person name="Schleich S."/>
            <person name="Schroeter R."/>
            <person name="Scoffone F."/>
            <person name="Sekiguchi J."/>
            <person name="Sekowska A."/>
            <person name="Seror S.J."/>
            <person name="Serror P."/>
            <person name="Shin B.-S."/>
            <person name="Soldo B."/>
            <person name="Sorokin A."/>
            <person name="Tacconi E."/>
            <person name="Takagi T."/>
            <person name="Takahashi H."/>
            <person name="Takemaru K."/>
            <person name="Takeuchi M."/>
            <person name="Tamakoshi A."/>
            <person name="Tanaka T."/>
            <person name="Terpstra P."/>
            <person name="Tognoni A."/>
            <person name="Tosato V."/>
            <person name="Uchiyama S."/>
            <person name="Vandenbol M."/>
            <person name="Vannier F."/>
            <person name="Vassarotti A."/>
            <person name="Viari A."/>
            <person name="Wambutt R."/>
            <person name="Wedler E."/>
            <person name="Wedler H."/>
            <person name="Weitzenegger T."/>
            <person name="Winters P."/>
            <person name="Wipat A."/>
            <person name="Yamamoto H."/>
            <person name="Yamane K."/>
            <person name="Yasumoto K."/>
            <person name="Yata K."/>
            <person name="Yoshida K."/>
            <person name="Yoshikawa H.-F."/>
            <person name="Zumstein E."/>
            <person name="Yoshikawa H."/>
            <person name="Danchin A."/>
        </authorList>
    </citation>
    <scope>NUCLEOTIDE SEQUENCE [LARGE SCALE GENOMIC DNA]</scope>
    <source>
        <strain>168</strain>
    </source>
</reference>
<name>YFKS_BACSU</name>
<comment type="subcellular location">
    <subcellularLocation>
        <location evidence="2">Membrane</location>
        <topology evidence="2">Single-pass membrane protein</topology>
    </subcellularLocation>
</comment>
<feature type="chain" id="PRO_0000049530" description="Uncharacterized protein YfkS">
    <location>
        <begin position="1"/>
        <end position="66"/>
    </location>
</feature>
<feature type="transmembrane region" description="Helical" evidence="1">
    <location>
        <begin position="32"/>
        <end position="49"/>
    </location>
</feature>
<keyword id="KW-0472">Membrane</keyword>
<keyword id="KW-1185">Reference proteome</keyword>
<keyword id="KW-0812">Transmembrane</keyword>
<keyword id="KW-1133">Transmembrane helix</keyword>
<protein>
    <recommendedName>
        <fullName>Uncharacterized protein YfkS</fullName>
    </recommendedName>
</protein>
<evidence type="ECO:0000255" key="1"/>
<evidence type="ECO:0000305" key="2"/>
<accession>O35036</accession>
<proteinExistence type="predicted"/>
<gene>
    <name type="primary">yfkS</name>
    <name type="ordered locus">BSU07770</name>
</gene>
<dbReference type="EMBL" id="D86417">
    <property type="protein sequence ID" value="BAA22292.1"/>
    <property type="molecule type" value="Genomic_DNA"/>
</dbReference>
<dbReference type="EMBL" id="AL009126">
    <property type="protein sequence ID" value="CAB12606.1"/>
    <property type="molecule type" value="Genomic_DNA"/>
</dbReference>
<dbReference type="PIR" id="E69809">
    <property type="entry name" value="E69809"/>
</dbReference>
<dbReference type="RefSeq" id="NP_388658.1">
    <property type="nucleotide sequence ID" value="NC_000964.3"/>
</dbReference>
<dbReference type="RefSeq" id="WP_003233686.1">
    <property type="nucleotide sequence ID" value="NZ_OZ025638.1"/>
</dbReference>
<dbReference type="FunCoup" id="O35036">
    <property type="interactions" value="29"/>
</dbReference>
<dbReference type="STRING" id="224308.BSU07770"/>
<dbReference type="PaxDb" id="224308-BSU07770"/>
<dbReference type="EnsemblBacteria" id="CAB12606">
    <property type="protein sequence ID" value="CAB12606"/>
    <property type="gene ID" value="BSU_07770"/>
</dbReference>
<dbReference type="GeneID" id="936123"/>
<dbReference type="KEGG" id="bsu:BSU07770"/>
<dbReference type="PATRIC" id="fig|224308.179.peg.841"/>
<dbReference type="InParanoid" id="O35036"/>
<dbReference type="OrthoDB" id="2894502at2"/>
<dbReference type="BioCyc" id="BSUB:BSU07770-MONOMER"/>
<dbReference type="Proteomes" id="UP000001570">
    <property type="component" value="Chromosome"/>
</dbReference>
<dbReference type="GO" id="GO:0016020">
    <property type="term" value="C:membrane"/>
    <property type="evidence" value="ECO:0007669"/>
    <property type="project" value="UniProtKB-SubCell"/>
</dbReference>
<organism>
    <name type="scientific">Bacillus subtilis (strain 168)</name>
    <dbReference type="NCBI Taxonomy" id="224308"/>
    <lineage>
        <taxon>Bacteria</taxon>
        <taxon>Bacillati</taxon>
        <taxon>Bacillota</taxon>
        <taxon>Bacilli</taxon>
        <taxon>Bacillales</taxon>
        <taxon>Bacillaceae</taxon>
        <taxon>Bacillus</taxon>
    </lineage>
</organism>
<sequence length="66" mass="7801">MISYIVQTLIVCIAIYAYEWKNFRSANNLTKWAFSLLIAGSAFLWIYMRVNPLLPRLGHLFKYIPF</sequence>